<evidence type="ECO:0000255" key="1">
    <source>
        <dbReference type="HAMAP-Rule" id="MF_01864"/>
    </source>
</evidence>
<evidence type="ECO:0000255" key="2">
    <source>
        <dbReference type="PROSITE-ProRule" id="PRU01266"/>
    </source>
</evidence>
<evidence type="ECO:0000256" key="3">
    <source>
        <dbReference type="SAM" id="MobiDB-lite"/>
    </source>
</evidence>
<gene>
    <name evidence="1" type="primary">miaB</name>
    <name type="ordered locus">AnaeK_1514</name>
</gene>
<organism>
    <name type="scientific">Anaeromyxobacter sp. (strain K)</name>
    <dbReference type="NCBI Taxonomy" id="447217"/>
    <lineage>
        <taxon>Bacteria</taxon>
        <taxon>Pseudomonadati</taxon>
        <taxon>Myxococcota</taxon>
        <taxon>Myxococcia</taxon>
        <taxon>Myxococcales</taxon>
        <taxon>Cystobacterineae</taxon>
        <taxon>Anaeromyxobacteraceae</taxon>
        <taxon>Anaeromyxobacter</taxon>
    </lineage>
</organism>
<dbReference type="EC" id="2.8.4.3" evidence="1"/>
<dbReference type="EMBL" id="CP001131">
    <property type="protein sequence ID" value="ACG72744.1"/>
    <property type="molecule type" value="Genomic_DNA"/>
</dbReference>
<dbReference type="RefSeq" id="WP_012525564.1">
    <property type="nucleotide sequence ID" value="NC_011145.1"/>
</dbReference>
<dbReference type="SMR" id="B4UK35"/>
<dbReference type="KEGG" id="ank:AnaeK_1514"/>
<dbReference type="HOGENOM" id="CLU_018697_2_2_7"/>
<dbReference type="OrthoDB" id="9805215at2"/>
<dbReference type="Proteomes" id="UP000001871">
    <property type="component" value="Chromosome"/>
</dbReference>
<dbReference type="GO" id="GO:0005829">
    <property type="term" value="C:cytosol"/>
    <property type="evidence" value="ECO:0007669"/>
    <property type="project" value="TreeGrafter"/>
</dbReference>
<dbReference type="GO" id="GO:0051539">
    <property type="term" value="F:4 iron, 4 sulfur cluster binding"/>
    <property type="evidence" value="ECO:0007669"/>
    <property type="project" value="UniProtKB-UniRule"/>
</dbReference>
<dbReference type="GO" id="GO:0046872">
    <property type="term" value="F:metal ion binding"/>
    <property type="evidence" value="ECO:0007669"/>
    <property type="project" value="UniProtKB-KW"/>
</dbReference>
<dbReference type="GO" id="GO:0035597">
    <property type="term" value="F:N6-isopentenyladenosine methylthiotransferase activity"/>
    <property type="evidence" value="ECO:0007669"/>
    <property type="project" value="TreeGrafter"/>
</dbReference>
<dbReference type="CDD" id="cd01335">
    <property type="entry name" value="Radical_SAM"/>
    <property type="match status" value="1"/>
</dbReference>
<dbReference type="FunFam" id="3.40.50.12160:FF:000003">
    <property type="entry name" value="CDK5 regulatory subunit-associated protein 1"/>
    <property type="match status" value="1"/>
</dbReference>
<dbReference type="FunFam" id="3.80.30.20:FF:000001">
    <property type="entry name" value="tRNA-2-methylthio-N(6)-dimethylallyladenosine synthase 2"/>
    <property type="match status" value="1"/>
</dbReference>
<dbReference type="Gene3D" id="3.40.50.12160">
    <property type="entry name" value="Methylthiotransferase, N-terminal domain"/>
    <property type="match status" value="1"/>
</dbReference>
<dbReference type="Gene3D" id="3.80.30.20">
    <property type="entry name" value="tm_1862 like domain"/>
    <property type="match status" value="1"/>
</dbReference>
<dbReference type="HAMAP" id="MF_01864">
    <property type="entry name" value="tRNA_metthiotr_MiaB"/>
    <property type="match status" value="1"/>
</dbReference>
<dbReference type="InterPro" id="IPR006638">
    <property type="entry name" value="Elp3/MiaA/NifB-like_rSAM"/>
</dbReference>
<dbReference type="InterPro" id="IPR005839">
    <property type="entry name" value="Methylthiotransferase"/>
</dbReference>
<dbReference type="InterPro" id="IPR013848">
    <property type="entry name" value="Methylthiotransferase_N"/>
</dbReference>
<dbReference type="InterPro" id="IPR038135">
    <property type="entry name" value="Methylthiotransferase_N_sf"/>
</dbReference>
<dbReference type="InterPro" id="IPR006463">
    <property type="entry name" value="MiaB_methiolase"/>
</dbReference>
<dbReference type="InterPro" id="IPR007197">
    <property type="entry name" value="rSAM"/>
</dbReference>
<dbReference type="InterPro" id="IPR023404">
    <property type="entry name" value="rSAM_horseshoe"/>
</dbReference>
<dbReference type="InterPro" id="IPR002792">
    <property type="entry name" value="TRAM_dom"/>
</dbReference>
<dbReference type="NCBIfam" id="TIGR01574">
    <property type="entry name" value="miaB-methiolase"/>
    <property type="match status" value="1"/>
</dbReference>
<dbReference type="NCBIfam" id="TIGR00089">
    <property type="entry name" value="MiaB/RimO family radical SAM methylthiotransferase"/>
    <property type="match status" value="1"/>
</dbReference>
<dbReference type="PANTHER" id="PTHR43020">
    <property type="entry name" value="CDK5 REGULATORY SUBUNIT-ASSOCIATED PROTEIN 1"/>
    <property type="match status" value="1"/>
</dbReference>
<dbReference type="PANTHER" id="PTHR43020:SF2">
    <property type="entry name" value="MITOCHONDRIAL TRNA METHYLTHIOTRANSFERASE CDK5RAP1"/>
    <property type="match status" value="1"/>
</dbReference>
<dbReference type="Pfam" id="PF04055">
    <property type="entry name" value="Radical_SAM"/>
    <property type="match status" value="1"/>
</dbReference>
<dbReference type="Pfam" id="PF01938">
    <property type="entry name" value="TRAM"/>
    <property type="match status" value="1"/>
</dbReference>
<dbReference type="Pfam" id="PF00919">
    <property type="entry name" value="UPF0004"/>
    <property type="match status" value="1"/>
</dbReference>
<dbReference type="SFLD" id="SFLDF00273">
    <property type="entry name" value="(dimethylallyl)adenosine_tRNA"/>
    <property type="match status" value="1"/>
</dbReference>
<dbReference type="SFLD" id="SFLDG01082">
    <property type="entry name" value="B12-binding_domain_containing"/>
    <property type="match status" value="1"/>
</dbReference>
<dbReference type="SFLD" id="SFLDS00029">
    <property type="entry name" value="Radical_SAM"/>
    <property type="match status" value="1"/>
</dbReference>
<dbReference type="SMART" id="SM00729">
    <property type="entry name" value="Elp3"/>
    <property type="match status" value="1"/>
</dbReference>
<dbReference type="SUPFAM" id="SSF102114">
    <property type="entry name" value="Radical SAM enzymes"/>
    <property type="match status" value="1"/>
</dbReference>
<dbReference type="PROSITE" id="PS51449">
    <property type="entry name" value="MTTASE_N"/>
    <property type="match status" value="1"/>
</dbReference>
<dbReference type="PROSITE" id="PS51918">
    <property type="entry name" value="RADICAL_SAM"/>
    <property type="match status" value="1"/>
</dbReference>
<dbReference type="PROSITE" id="PS50926">
    <property type="entry name" value="TRAM"/>
    <property type="match status" value="1"/>
</dbReference>
<comment type="function">
    <text evidence="1">Catalyzes the methylthiolation of N6-(dimethylallyl)adenosine (i(6)A), leading to the formation of 2-methylthio-N6-(dimethylallyl)adenosine (ms(2)i(6)A) at position 37 in tRNAs that read codons beginning with uridine.</text>
</comment>
<comment type="catalytic activity">
    <reaction evidence="1">
        <text>N(6)-dimethylallyladenosine(37) in tRNA + (sulfur carrier)-SH + AH2 + 2 S-adenosyl-L-methionine = 2-methylsulfanyl-N(6)-dimethylallyladenosine(37) in tRNA + (sulfur carrier)-H + 5'-deoxyadenosine + L-methionine + A + S-adenosyl-L-homocysteine + 2 H(+)</text>
        <dbReference type="Rhea" id="RHEA:37067"/>
        <dbReference type="Rhea" id="RHEA-COMP:10375"/>
        <dbReference type="Rhea" id="RHEA-COMP:10376"/>
        <dbReference type="Rhea" id="RHEA-COMP:14737"/>
        <dbReference type="Rhea" id="RHEA-COMP:14739"/>
        <dbReference type="ChEBI" id="CHEBI:13193"/>
        <dbReference type="ChEBI" id="CHEBI:15378"/>
        <dbReference type="ChEBI" id="CHEBI:17319"/>
        <dbReference type="ChEBI" id="CHEBI:17499"/>
        <dbReference type="ChEBI" id="CHEBI:29917"/>
        <dbReference type="ChEBI" id="CHEBI:57844"/>
        <dbReference type="ChEBI" id="CHEBI:57856"/>
        <dbReference type="ChEBI" id="CHEBI:59789"/>
        <dbReference type="ChEBI" id="CHEBI:64428"/>
        <dbReference type="ChEBI" id="CHEBI:74415"/>
        <dbReference type="ChEBI" id="CHEBI:74417"/>
        <dbReference type="EC" id="2.8.4.3"/>
    </reaction>
</comment>
<comment type="cofactor">
    <cofactor evidence="1">
        <name>[4Fe-4S] cluster</name>
        <dbReference type="ChEBI" id="CHEBI:49883"/>
    </cofactor>
    <text evidence="1">Binds 2 [4Fe-4S] clusters. One cluster is coordinated with 3 cysteines and an exchangeable S-adenosyl-L-methionine.</text>
</comment>
<comment type="subunit">
    <text evidence="1">Monomer.</text>
</comment>
<comment type="subcellular location">
    <subcellularLocation>
        <location evidence="1">Cytoplasm</location>
    </subcellularLocation>
</comment>
<comment type="similarity">
    <text evidence="1">Belongs to the methylthiotransferase family. MiaB subfamily.</text>
</comment>
<accession>B4UK35</accession>
<reference key="1">
    <citation type="submission" date="2008-08" db="EMBL/GenBank/DDBJ databases">
        <title>Complete sequence of Anaeromyxobacter sp. K.</title>
        <authorList>
            <consortium name="US DOE Joint Genome Institute"/>
            <person name="Lucas S."/>
            <person name="Copeland A."/>
            <person name="Lapidus A."/>
            <person name="Glavina del Rio T."/>
            <person name="Dalin E."/>
            <person name="Tice H."/>
            <person name="Bruce D."/>
            <person name="Goodwin L."/>
            <person name="Pitluck S."/>
            <person name="Saunders E."/>
            <person name="Brettin T."/>
            <person name="Detter J.C."/>
            <person name="Han C."/>
            <person name="Larimer F."/>
            <person name="Land M."/>
            <person name="Hauser L."/>
            <person name="Kyrpides N."/>
            <person name="Ovchinnikiva G."/>
            <person name="Beliaev A."/>
        </authorList>
    </citation>
    <scope>NUCLEOTIDE SEQUENCE [LARGE SCALE GENOMIC DNA]</scope>
    <source>
        <strain>K</strain>
    </source>
</reference>
<proteinExistence type="inferred from homology"/>
<sequence>MSDLVPLSRKPAPAAGGPAPSPAAPPRKVYVHTFGCQMNESDSDRMVELLGRHAYARAASADEADLILLNTCAVREKAEQKLLSALGRYREVKARRGALIAVSGCVAQQEKDRLLARVPYVDFVFGPDNIGRLPEMVERARDERFAETGWMDSEEYVFPRADPEAARGRVTAFVTAMKGCDNVCAFCIVPHTRGREVSRPFPDVVAECAALAGVGVREVTLIGQNVNSYTGGCTFADLLRRVAAVPGIDRIRFTTSHPHDLSDALVEVFRDEPKVMPHFHLPVQSGSDAVLRRMRRDYSVAEYLDRFDRLRAARPGIAITTDFIVGFPGETDADFEASLALLERARFEQSFSFVFSPRPHTVAAVRLGSAPEWRDVPREAAVARLERLLAAQRRIAGEILAGELGKVVEVLVEGPSDEPGERLGRTPENRVVHLAADEAAAPAGARVAVRITRAGGSSLSGTLA</sequence>
<name>MIAB_ANASK</name>
<feature type="chain" id="PRO_0000374112" description="tRNA-2-methylthio-N(6)-dimethylallyladenosine synthase">
    <location>
        <begin position="1"/>
        <end position="464"/>
    </location>
</feature>
<feature type="domain" description="MTTase N-terminal" evidence="1">
    <location>
        <begin position="27"/>
        <end position="142"/>
    </location>
</feature>
<feature type="domain" description="Radical SAM core" evidence="2">
    <location>
        <begin position="166"/>
        <end position="398"/>
    </location>
</feature>
<feature type="domain" description="TRAM" evidence="1">
    <location>
        <begin position="401"/>
        <end position="464"/>
    </location>
</feature>
<feature type="region of interest" description="Disordered" evidence="3">
    <location>
        <begin position="1"/>
        <end position="24"/>
    </location>
</feature>
<feature type="compositionally biased region" description="Low complexity" evidence="3">
    <location>
        <begin position="8"/>
        <end position="18"/>
    </location>
</feature>
<feature type="binding site" evidence="1">
    <location>
        <position position="36"/>
    </location>
    <ligand>
        <name>[4Fe-4S] cluster</name>
        <dbReference type="ChEBI" id="CHEBI:49883"/>
        <label>1</label>
    </ligand>
</feature>
<feature type="binding site" evidence="1">
    <location>
        <position position="72"/>
    </location>
    <ligand>
        <name>[4Fe-4S] cluster</name>
        <dbReference type="ChEBI" id="CHEBI:49883"/>
        <label>1</label>
    </ligand>
</feature>
<feature type="binding site" evidence="1">
    <location>
        <position position="105"/>
    </location>
    <ligand>
        <name>[4Fe-4S] cluster</name>
        <dbReference type="ChEBI" id="CHEBI:49883"/>
        <label>1</label>
    </ligand>
</feature>
<feature type="binding site" evidence="1">
    <location>
        <position position="180"/>
    </location>
    <ligand>
        <name>[4Fe-4S] cluster</name>
        <dbReference type="ChEBI" id="CHEBI:49883"/>
        <label>2</label>
        <note>4Fe-4S-S-AdoMet</note>
    </ligand>
</feature>
<feature type="binding site" evidence="1">
    <location>
        <position position="184"/>
    </location>
    <ligand>
        <name>[4Fe-4S] cluster</name>
        <dbReference type="ChEBI" id="CHEBI:49883"/>
        <label>2</label>
        <note>4Fe-4S-S-AdoMet</note>
    </ligand>
</feature>
<feature type="binding site" evidence="1">
    <location>
        <position position="187"/>
    </location>
    <ligand>
        <name>[4Fe-4S] cluster</name>
        <dbReference type="ChEBI" id="CHEBI:49883"/>
        <label>2</label>
        <note>4Fe-4S-S-AdoMet</note>
    </ligand>
</feature>
<protein>
    <recommendedName>
        <fullName evidence="1">tRNA-2-methylthio-N(6)-dimethylallyladenosine synthase</fullName>
        <ecNumber evidence="1">2.8.4.3</ecNumber>
    </recommendedName>
    <alternativeName>
        <fullName evidence="1">(Dimethylallyl)adenosine tRNA methylthiotransferase MiaB</fullName>
    </alternativeName>
    <alternativeName>
        <fullName evidence="1">tRNA-i(6)A37 methylthiotransferase</fullName>
    </alternativeName>
</protein>
<keyword id="KW-0004">4Fe-4S</keyword>
<keyword id="KW-0963">Cytoplasm</keyword>
<keyword id="KW-0408">Iron</keyword>
<keyword id="KW-0411">Iron-sulfur</keyword>
<keyword id="KW-0479">Metal-binding</keyword>
<keyword id="KW-0949">S-adenosyl-L-methionine</keyword>
<keyword id="KW-0808">Transferase</keyword>
<keyword id="KW-0819">tRNA processing</keyword>